<proteinExistence type="inferred from homology"/>
<evidence type="ECO:0000255" key="1">
    <source>
        <dbReference type="HAMAP-Rule" id="MF_00600"/>
    </source>
</evidence>
<comment type="function">
    <text evidence="1">Together with its co-chaperonin GroES, plays an essential role in assisting protein folding. The GroEL-GroES system forms a nano-cage that allows encapsulation of the non-native substrate proteins and provides a physical environment optimized to promote and accelerate protein folding.</text>
</comment>
<comment type="catalytic activity">
    <reaction evidence="1">
        <text>ATP + H2O + a folded polypeptide = ADP + phosphate + an unfolded polypeptide.</text>
        <dbReference type="EC" id="5.6.1.7"/>
    </reaction>
</comment>
<comment type="subunit">
    <text evidence="1">Forms a cylinder of 14 subunits composed of two heptameric rings stacked back-to-back. Interacts with the co-chaperonin GroES.</text>
</comment>
<comment type="subcellular location">
    <subcellularLocation>
        <location evidence="1">Cytoplasm</location>
    </subcellularLocation>
</comment>
<comment type="similarity">
    <text evidence="1">Belongs to the chaperonin (HSP60) family.</text>
</comment>
<geneLocation type="plasmid">
    <name>pMLa</name>
</geneLocation>
<keyword id="KW-0067">ATP-binding</keyword>
<keyword id="KW-0143">Chaperone</keyword>
<keyword id="KW-0963">Cytoplasm</keyword>
<keyword id="KW-0413">Isomerase</keyword>
<keyword id="KW-0547">Nucleotide-binding</keyword>
<keyword id="KW-0614">Plasmid</keyword>
<dbReference type="EC" id="5.6.1.7" evidence="1"/>
<dbReference type="EMBL" id="BA000013">
    <property type="protein sequence ID" value="BAB54710.1"/>
    <property type="molecule type" value="Genomic_DNA"/>
</dbReference>
<dbReference type="RefSeq" id="WP_010915800.1">
    <property type="nucleotide sequence ID" value="NC_002679.1"/>
</dbReference>
<dbReference type="SMR" id="Q981J9"/>
<dbReference type="KEGG" id="mlo:mlr9342"/>
<dbReference type="PATRIC" id="fig|266835.9.peg.7115"/>
<dbReference type="HOGENOM" id="CLU_016503_3_0_5"/>
<dbReference type="Proteomes" id="UP000000552">
    <property type="component" value="Plasmid pMLa"/>
</dbReference>
<dbReference type="GO" id="GO:0005737">
    <property type="term" value="C:cytoplasm"/>
    <property type="evidence" value="ECO:0007669"/>
    <property type="project" value="UniProtKB-SubCell"/>
</dbReference>
<dbReference type="GO" id="GO:0005524">
    <property type="term" value="F:ATP binding"/>
    <property type="evidence" value="ECO:0007669"/>
    <property type="project" value="UniProtKB-UniRule"/>
</dbReference>
<dbReference type="GO" id="GO:0140662">
    <property type="term" value="F:ATP-dependent protein folding chaperone"/>
    <property type="evidence" value="ECO:0007669"/>
    <property type="project" value="InterPro"/>
</dbReference>
<dbReference type="GO" id="GO:0016853">
    <property type="term" value="F:isomerase activity"/>
    <property type="evidence" value="ECO:0007669"/>
    <property type="project" value="UniProtKB-KW"/>
</dbReference>
<dbReference type="GO" id="GO:0051082">
    <property type="term" value="F:unfolded protein binding"/>
    <property type="evidence" value="ECO:0007669"/>
    <property type="project" value="UniProtKB-UniRule"/>
</dbReference>
<dbReference type="GO" id="GO:0042026">
    <property type="term" value="P:protein refolding"/>
    <property type="evidence" value="ECO:0007669"/>
    <property type="project" value="UniProtKB-UniRule"/>
</dbReference>
<dbReference type="CDD" id="cd03344">
    <property type="entry name" value="GroEL"/>
    <property type="match status" value="1"/>
</dbReference>
<dbReference type="FunFam" id="1.10.560.10:FF:000001">
    <property type="entry name" value="60 kDa chaperonin"/>
    <property type="match status" value="1"/>
</dbReference>
<dbReference type="FunFam" id="3.50.7.10:FF:000001">
    <property type="entry name" value="60 kDa chaperonin"/>
    <property type="match status" value="1"/>
</dbReference>
<dbReference type="Gene3D" id="3.50.7.10">
    <property type="entry name" value="GroEL"/>
    <property type="match status" value="1"/>
</dbReference>
<dbReference type="Gene3D" id="1.10.560.10">
    <property type="entry name" value="GroEL-like equatorial domain"/>
    <property type="match status" value="1"/>
</dbReference>
<dbReference type="Gene3D" id="3.30.260.10">
    <property type="entry name" value="TCP-1-like chaperonin intermediate domain"/>
    <property type="match status" value="1"/>
</dbReference>
<dbReference type="HAMAP" id="MF_00600">
    <property type="entry name" value="CH60"/>
    <property type="match status" value="1"/>
</dbReference>
<dbReference type="InterPro" id="IPR018370">
    <property type="entry name" value="Chaperonin_Cpn60_CS"/>
</dbReference>
<dbReference type="InterPro" id="IPR001844">
    <property type="entry name" value="Cpn60/GroEL"/>
</dbReference>
<dbReference type="InterPro" id="IPR002423">
    <property type="entry name" value="Cpn60/GroEL/TCP-1"/>
</dbReference>
<dbReference type="InterPro" id="IPR027409">
    <property type="entry name" value="GroEL-like_apical_dom_sf"/>
</dbReference>
<dbReference type="InterPro" id="IPR027413">
    <property type="entry name" value="GROEL-like_equatorial_sf"/>
</dbReference>
<dbReference type="InterPro" id="IPR027410">
    <property type="entry name" value="TCP-1-like_intermed_sf"/>
</dbReference>
<dbReference type="NCBIfam" id="TIGR02348">
    <property type="entry name" value="GroEL"/>
    <property type="match status" value="1"/>
</dbReference>
<dbReference type="NCBIfam" id="NF000592">
    <property type="entry name" value="PRK00013.1"/>
    <property type="match status" value="1"/>
</dbReference>
<dbReference type="NCBIfam" id="NF009487">
    <property type="entry name" value="PRK12849.1"/>
    <property type="match status" value="1"/>
</dbReference>
<dbReference type="NCBIfam" id="NF009488">
    <property type="entry name" value="PRK12850.1"/>
    <property type="match status" value="1"/>
</dbReference>
<dbReference type="NCBIfam" id="NF009489">
    <property type="entry name" value="PRK12851.1"/>
    <property type="match status" value="1"/>
</dbReference>
<dbReference type="PANTHER" id="PTHR45633">
    <property type="entry name" value="60 KDA HEAT SHOCK PROTEIN, MITOCHONDRIAL"/>
    <property type="match status" value="1"/>
</dbReference>
<dbReference type="Pfam" id="PF00118">
    <property type="entry name" value="Cpn60_TCP1"/>
    <property type="match status" value="1"/>
</dbReference>
<dbReference type="PRINTS" id="PR00298">
    <property type="entry name" value="CHAPERONIN60"/>
</dbReference>
<dbReference type="SUPFAM" id="SSF52029">
    <property type="entry name" value="GroEL apical domain-like"/>
    <property type="match status" value="1"/>
</dbReference>
<dbReference type="SUPFAM" id="SSF48592">
    <property type="entry name" value="GroEL equatorial domain-like"/>
    <property type="match status" value="1"/>
</dbReference>
<dbReference type="SUPFAM" id="SSF54849">
    <property type="entry name" value="GroEL-intermediate domain like"/>
    <property type="match status" value="1"/>
</dbReference>
<dbReference type="PROSITE" id="PS00296">
    <property type="entry name" value="CHAPERONINS_CPN60"/>
    <property type="match status" value="1"/>
</dbReference>
<gene>
    <name evidence="1" type="primary">groEL5</name>
    <name evidence="1" type="synonym">groL5</name>
    <name type="ordered locus">mlr9342</name>
</gene>
<reference key="1">
    <citation type="journal article" date="2000" name="DNA Res.">
        <title>Complete genome structure of the nitrogen-fixing symbiotic bacterium Mesorhizobium loti.</title>
        <authorList>
            <person name="Kaneko T."/>
            <person name="Nakamura Y."/>
            <person name="Sato S."/>
            <person name="Asamizu E."/>
            <person name="Kato T."/>
            <person name="Sasamoto S."/>
            <person name="Watanabe A."/>
            <person name="Idesawa K."/>
            <person name="Ishikawa A."/>
            <person name="Kawashima K."/>
            <person name="Kimura T."/>
            <person name="Kishida Y."/>
            <person name="Kiyokawa C."/>
            <person name="Kohara M."/>
            <person name="Matsumoto M."/>
            <person name="Matsuno A."/>
            <person name="Mochizuki Y."/>
            <person name="Nakayama S."/>
            <person name="Nakazaki N."/>
            <person name="Shimpo S."/>
            <person name="Sugimoto M."/>
            <person name="Takeuchi C."/>
            <person name="Yamada M."/>
            <person name="Tabata S."/>
        </authorList>
    </citation>
    <scope>NUCLEOTIDE SEQUENCE [LARGE SCALE GENOMIC DNA]</scope>
    <source>
        <strain>LMG 29417 / CECT 9101 / MAFF 303099</strain>
    </source>
</reference>
<feature type="chain" id="PRO_0000063498" description="Chaperonin GroEL 5">
    <location>
        <begin position="1"/>
        <end position="549"/>
    </location>
</feature>
<feature type="binding site" evidence="1">
    <location>
        <begin position="30"/>
        <end position="33"/>
    </location>
    <ligand>
        <name>ATP</name>
        <dbReference type="ChEBI" id="CHEBI:30616"/>
    </ligand>
</feature>
<feature type="binding site" evidence="1">
    <location>
        <position position="51"/>
    </location>
    <ligand>
        <name>ATP</name>
        <dbReference type="ChEBI" id="CHEBI:30616"/>
    </ligand>
</feature>
<feature type="binding site" evidence="1">
    <location>
        <begin position="87"/>
        <end position="91"/>
    </location>
    <ligand>
        <name>ATP</name>
        <dbReference type="ChEBI" id="CHEBI:30616"/>
    </ligand>
</feature>
<feature type="binding site" evidence="1">
    <location>
        <position position="415"/>
    </location>
    <ligand>
        <name>ATP</name>
        <dbReference type="ChEBI" id="CHEBI:30616"/>
    </ligand>
</feature>
<feature type="binding site" evidence="1">
    <location>
        <position position="495"/>
    </location>
    <ligand>
        <name>ATP</name>
        <dbReference type="ChEBI" id="CHEBI:30616"/>
    </ligand>
</feature>
<organism>
    <name type="scientific">Mesorhizobium japonicum (strain LMG 29417 / CECT 9101 / MAFF 303099)</name>
    <name type="common">Mesorhizobium loti (strain MAFF 303099)</name>
    <dbReference type="NCBI Taxonomy" id="266835"/>
    <lineage>
        <taxon>Bacteria</taxon>
        <taxon>Pseudomonadati</taxon>
        <taxon>Pseudomonadota</taxon>
        <taxon>Alphaproteobacteria</taxon>
        <taxon>Hyphomicrobiales</taxon>
        <taxon>Phyllobacteriaceae</taxon>
        <taxon>Mesorhizobium</taxon>
    </lineage>
</organism>
<accession>Q981J9</accession>
<protein>
    <recommendedName>
        <fullName evidence="1">Chaperonin GroEL 5</fullName>
        <ecNumber evidence="1">5.6.1.7</ecNumber>
    </recommendedName>
    <alternativeName>
        <fullName evidence="1">60 kDa chaperonin 5</fullName>
    </alternativeName>
    <alternativeName>
        <fullName evidence="1">Chaperonin-60 5</fullName>
        <shortName evidence="1">Cpn60 5</shortName>
    </alternativeName>
</protein>
<sequence length="549" mass="57244">MAAKDVKFSRDARERMLRGVNILADAVKVTLGPKGRNVVIDKSFGAPRITKDGVTVAKEIELEDKFENMGAQMVREVASKTNDIAGDGTTTATVLAQSIVQEGHKAVAAGMNPMDLKRGIDLAVADVVATLIKNAKKIKTSEEVAQVGTIAGNGDSSVGSMIAEAMQKVGNEGVITVEEAKTAETELEVVEGMQFDRGYLSPYFVTNADKMVADLEDAYILLHEKKLSNLQAMLPILEAVVQTSKPLVIISEDVEGEALATLVVNKLRGGLKIAAVKAPGFGDRRKAMLEDIAILTGGQVISEDLGIKLENVGLNMLGRAKKVSISKENTTIVDGAGKKAEIQGRVAQIKQQIEETTSDYDKEKLQERLAKLAGGVAVIRVGGATEVEVKEKKDRVDDALNATRAAVEEGIVPGGGVALLRASLSINAVGANSDQTAGISIVRRALQAPARQIAANAGAEASIVAGKILENKGATYGYNAQTGEYGDMIAMGIVDPVKVVRTALQDAASVAGLLVTAEAMIAEAPKKESAGGGMPGGMPGGGMGGMGGF</sequence>
<name>CH605_RHILO</name>